<proteinExistence type="inferred from homology"/>
<organism>
    <name type="scientific">Bacillus anthracis (strain A0248)</name>
    <dbReference type="NCBI Taxonomy" id="592021"/>
    <lineage>
        <taxon>Bacteria</taxon>
        <taxon>Bacillati</taxon>
        <taxon>Bacillota</taxon>
        <taxon>Bacilli</taxon>
        <taxon>Bacillales</taxon>
        <taxon>Bacillaceae</taxon>
        <taxon>Bacillus</taxon>
        <taxon>Bacillus cereus group</taxon>
    </lineage>
</organism>
<keyword id="KW-0067">ATP-binding</keyword>
<keyword id="KW-0173">Coenzyme A biosynthesis</keyword>
<keyword id="KW-0963">Cytoplasm</keyword>
<keyword id="KW-0460">Magnesium</keyword>
<keyword id="KW-0547">Nucleotide-binding</keyword>
<keyword id="KW-0548">Nucleotidyltransferase</keyword>
<keyword id="KW-0808">Transferase</keyword>
<accession>C3P6T7</accession>
<protein>
    <recommendedName>
        <fullName evidence="1">Phosphopantetheine adenylyltransferase</fullName>
        <ecNumber evidence="1">2.7.7.3</ecNumber>
    </recommendedName>
    <alternativeName>
        <fullName evidence="1">Dephospho-CoA pyrophosphorylase</fullName>
    </alternativeName>
    <alternativeName>
        <fullName evidence="1">Pantetheine-phosphate adenylyltransferase</fullName>
        <shortName evidence="1">PPAT</shortName>
    </alternativeName>
</protein>
<sequence length="163" mass="18379">MTSIAISSGSFDPITLGHLDIIKRGAKVFDEVYVVVLNNSSKKPFFSVEERLDLIREATKDIPNVKVDSHSGLLVEYAKMRNANAILRGLRAVSDFEYEMQITSMNRKLDENIETFFIMTNNQYSFLSSSIVKEVARYGGSVVDLVPPVVERALKEKFQTPLK</sequence>
<dbReference type="EC" id="2.7.7.3" evidence="1"/>
<dbReference type="EMBL" id="CP001598">
    <property type="protein sequence ID" value="ACQ50749.1"/>
    <property type="molecule type" value="Genomic_DNA"/>
</dbReference>
<dbReference type="RefSeq" id="WP_000200598.1">
    <property type="nucleotide sequence ID" value="NC_012659.1"/>
</dbReference>
<dbReference type="SMR" id="C3P6T7"/>
<dbReference type="GeneID" id="92799798"/>
<dbReference type="KEGG" id="bai:BAA_4161"/>
<dbReference type="HOGENOM" id="CLU_100149_0_1_9"/>
<dbReference type="UniPathway" id="UPA00241">
    <property type="reaction ID" value="UER00355"/>
</dbReference>
<dbReference type="GO" id="GO:0005737">
    <property type="term" value="C:cytoplasm"/>
    <property type="evidence" value="ECO:0007669"/>
    <property type="project" value="UniProtKB-SubCell"/>
</dbReference>
<dbReference type="GO" id="GO:0005524">
    <property type="term" value="F:ATP binding"/>
    <property type="evidence" value="ECO:0007669"/>
    <property type="project" value="UniProtKB-KW"/>
</dbReference>
<dbReference type="GO" id="GO:0004595">
    <property type="term" value="F:pantetheine-phosphate adenylyltransferase activity"/>
    <property type="evidence" value="ECO:0007669"/>
    <property type="project" value="UniProtKB-UniRule"/>
</dbReference>
<dbReference type="GO" id="GO:0015937">
    <property type="term" value="P:coenzyme A biosynthetic process"/>
    <property type="evidence" value="ECO:0007669"/>
    <property type="project" value="UniProtKB-UniRule"/>
</dbReference>
<dbReference type="CDD" id="cd02163">
    <property type="entry name" value="PPAT"/>
    <property type="match status" value="1"/>
</dbReference>
<dbReference type="FunFam" id="3.40.50.620:FF:000012">
    <property type="entry name" value="Phosphopantetheine adenylyltransferase"/>
    <property type="match status" value="1"/>
</dbReference>
<dbReference type="Gene3D" id="3.40.50.620">
    <property type="entry name" value="HUPs"/>
    <property type="match status" value="1"/>
</dbReference>
<dbReference type="HAMAP" id="MF_00151">
    <property type="entry name" value="PPAT_bact"/>
    <property type="match status" value="1"/>
</dbReference>
<dbReference type="InterPro" id="IPR004821">
    <property type="entry name" value="Cyt_trans-like"/>
</dbReference>
<dbReference type="InterPro" id="IPR001980">
    <property type="entry name" value="PPAT"/>
</dbReference>
<dbReference type="InterPro" id="IPR014729">
    <property type="entry name" value="Rossmann-like_a/b/a_fold"/>
</dbReference>
<dbReference type="NCBIfam" id="TIGR01510">
    <property type="entry name" value="coaD_prev_kdtB"/>
    <property type="match status" value="1"/>
</dbReference>
<dbReference type="NCBIfam" id="TIGR00125">
    <property type="entry name" value="cyt_tran_rel"/>
    <property type="match status" value="1"/>
</dbReference>
<dbReference type="PANTHER" id="PTHR21342">
    <property type="entry name" value="PHOSPHOPANTETHEINE ADENYLYLTRANSFERASE"/>
    <property type="match status" value="1"/>
</dbReference>
<dbReference type="PANTHER" id="PTHR21342:SF1">
    <property type="entry name" value="PHOSPHOPANTETHEINE ADENYLYLTRANSFERASE"/>
    <property type="match status" value="1"/>
</dbReference>
<dbReference type="Pfam" id="PF01467">
    <property type="entry name" value="CTP_transf_like"/>
    <property type="match status" value="1"/>
</dbReference>
<dbReference type="PRINTS" id="PR01020">
    <property type="entry name" value="LPSBIOSNTHSS"/>
</dbReference>
<dbReference type="SUPFAM" id="SSF52374">
    <property type="entry name" value="Nucleotidylyl transferase"/>
    <property type="match status" value="1"/>
</dbReference>
<comment type="function">
    <text evidence="1">Reversibly transfers an adenylyl group from ATP to 4'-phosphopantetheine, yielding dephospho-CoA (dPCoA) and pyrophosphate.</text>
</comment>
<comment type="catalytic activity">
    <reaction evidence="1">
        <text>(R)-4'-phosphopantetheine + ATP + H(+) = 3'-dephospho-CoA + diphosphate</text>
        <dbReference type="Rhea" id="RHEA:19801"/>
        <dbReference type="ChEBI" id="CHEBI:15378"/>
        <dbReference type="ChEBI" id="CHEBI:30616"/>
        <dbReference type="ChEBI" id="CHEBI:33019"/>
        <dbReference type="ChEBI" id="CHEBI:57328"/>
        <dbReference type="ChEBI" id="CHEBI:61723"/>
        <dbReference type="EC" id="2.7.7.3"/>
    </reaction>
</comment>
<comment type="cofactor">
    <cofactor evidence="1">
        <name>Mg(2+)</name>
        <dbReference type="ChEBI" id="CHEBI:18420"/>
    </cofactor>
</comment>
<comment type="pathway">
    <text evidence="1">Cofactor biosynthesis; coenzyme A biosynthesis; CoA from (R)-pantothenate: step 4/5.</text>
</comment>
<comment type="subunit">
    <text evidence="1">Homohexamer.</text>
</comment>
<comment type="subcellular location">
    <subcellularLocation>
        <location evidence="1">Cytoplasm</location>
    </subcellularLocation>
</comment>
<comment type="similarity">
    <text evidence="1">Belongs to the bacterial CoaD family.</text>
</comment>
<name>COAD_BACAA</name>
<gene>
    <name evidence="1" type="primary">coaD</name>
    <name type="ordered locus">BAA_4161</name>
</gene>
<evidence type="ECO:0000255" key="1">
    <source>
        <dbReference type="HAMAP-Rule" id="MF_00151"/>
    </source>
</evidence>
<feature type="chain" id="PRO_1000123260" description="Phosphopantetheine adenylyltransferase">
    <location>
        <begin position="1"/>
        <end position="163"/>
    </location>
</feature>
<feature type="binding site" evidence="1">
    <location>
        <begin position="10"/>
        <end position="11"/>
    </location>
    <ligand>
        <name>ATP</name>
        <dbReference type="ChEBI" id="CHEBI:30616"/>
    </ligand>
</feature>
<feature type="binding site" evidence="1">
    <location>
        <position position="10"/>
    </location>
    <ligand>
        <name>substrate</name>
    </ligand>
</feature>
<feature type="binding site" evidence="1">
    <location>
        <position position="18"/>
    </location>
    <ligand>
        <name>ATP</name>
        <dbReference type="ChEBI" id="CHEBI:30616"/>
    </ligand>
</feature>
<feature type="binding site" evidence="1">
    <location>
        <position position="42"/>
    </location>
    <ligand>
        <name>substrate</name>
    </ligand>
</feature>
<feature type="binding site" evidence="1">
    <location>
        <position position="74"/>
    </location>
    <ligand>
        <name>substrate</name>
    </ligand>
</feature>
<feature type="binding site" evidence="1">
    <location>
        <position position="88"/>
    </location>
    <ligand>
        <name>substrate</name>
    </ligand>
</feature>
<feature type="binding site" evidence="1">
    <location>
        <begin position="89"/>
        <end position="91"/>
    </location>
    <ligand>
        <name>ATP</name>
        <dbReference type="ChEBI" id="CHEBI:30616"/>
    </ligand>
</feature>
<feature type="binding site" evidence="1">
    <location>
        <position position="99"/>
    </location>
    <ligand>
        <name>ATP</name>
        <dbReference type="ChEBI" id="CHEBI:30616"/>
    </ligand>
</feature>
<feature type="binding site" evidence="1">
    <location>
        <begin position="124"/>
        <end position="130"/>
    </location>
    <ligand>
        <name>ATP</name>
        <dbReference type="ChEBI" id="CHEBI:30616"/>
    </ligand>
</feature>
<feature type="site" description="Transition state stabilizer" evidence="1">
    <location>
        <position position="18"/>
    </location>
</feature>
<reference key="1">
    <citation type="submission" date="2009-04" db="EMBL/GenBank/DDBJ databases">
        <title>Genome sequence of Bacillus anthracis A0248.</title>
        <authorList>
            <person name="Dodson R.J."/>
            <person name="Munk A.C."/>
            <person name="Bruce D."/>
            <person name="Detter C."/>
            <person name="Tapia R."/>
            <person name="Sutton G."/>
            <person name="Sims D."/>
            <person name="Brettin T."/>
        </authorList>
    </citation>
    <scope>NUCLEOTIDE SEQUENCE [LARGE SCALE GENOMIC DNA]</scope>
    <source>
        <strain>A0248</strain>
    </source>
</reference>